<proteinExistence type="evidence at protein level"/>
<sequence>MLMPVHFLLLLLLLLGGPRTGLPHKFYKAKPIFSCLNTALSEAEKGQWEDASLLSKRSFHYLRSRDASSGEEEEGKEKKTFPISGARGGARGTRYRYVSQAQPRGKPRQDTAKSPHRTKFTLSLDVPTNIMNLLFNIAKAKNLRAQAAANAHLMAQIGRKK</sequence>
<feature type="signal peptide" evidence="1">
    <location>
        <begin position="1"/>
        <end position="21"/>
    </location>
</feature>
<feature type="propeptide" id="PRO_0000006245">
    <location>
        <begin position="22"/>
        <end position="118"/>
    </location>
</feature>
<feature type="chain" id="PRO_0000006246" description="Urocortin-3">
    <location>
        <begin position="120"/>
        <end position="157"/>
    </location>
</feature>
<feature type="region of interest" description="Disordered" evidence="2">
    <location>
        <begin position="64"/>
        <end position="118"/>
    </location>
</feature>
<feature type="modified residue" description="Isoleucine amide" evidence="1">
    <location>
        <position position="157"/>
    </location>
</feature>
<feature type="sequence variant" id="VAR_060410" description="In dbSNP:rs12768730.">
    <original>E</original>
    <variation>K</variation>
    <location>
        <position position="77"/>
    </location>
</feature>
<feature type="sequence variant" id="VAR_060411" description="In dbSNP:rs10904481." evidence="3 4 5">
    <original>R</original>
    <variation>G</variation>
    <location>
        <position position="91"/>
    </location>
</feature>
<feature type="helix" evidence="8">
    <location>
        <begin position="121"/>
        <end position="123"/>
    </location>
</feature>
<feature type="helix" evidence="9">
    <location>
        <begin position="143"/>
        <end position="156"/>
    </location>
</feature>
<evidence type="ECO:0000255" key="1"/>
<evidence type="ECO:0000256" key="2">
    <source>
        <dbReference type="SAM" id="MobiDB-lite"/>
    </source>
</evidence>
<evidence type="ECO:0000269" key="3">
    <source>
    </source>
</evidence>
<evidence type="ECO:0000269" key="4">
    <source>
    </source>
</evidence>
<evidence type="ECO:0000269" key="5">
    <source>
    </source>
</evidence>
<evidence type="ECO:0000269" key="6">
    <source>
    </source>
</evidence>
<evidence type="ECO:0000305" key="7"/>
<evidence type="ECO:0007829" key="8">
    <source>
        <dbReference type="PDB" id="2RMH"/>
    </source>
</evidence>
<evidence type="ECO:0007829" key="9">
    <source>
        <dbReference type="PDB" id="3N93"/>
    </source>
</evidence>
<dbReference type="EMBL" id="AF361943">
    <property type="protein sequence ID" value="AAK67317.1"/>
    <property type="molecule type" value="Genomic_DNA"/>
</dbReference>
<dbReference type="EMBL" id="AY026949">
    <property type="protein sequence ID" value="AAK11729.1"/>
    <property type="molecule type" value="mRNA"/>
</dbReference>
<dbReference type="EMBL" id="AL683826">
    <property type="status" value="NOT_ANNOTATED_CDS"/>
    <property type="molecule type" value="Genomic_DNA"/>
</dbReference>
<dbReference type="EMBL" id="BC069530">
    <property type="protein sequence ID" value="AAH69530.1"/>
    <property type="molecule type" value="mRNA"/>
</dbReference>
<dbReference type="EMBL" id="BC100867">
    <property type="protein sequence ID" value="AAI00868.1"/>
    <property type="molecule type" value="mRNA"/>
</dbReference>
<dbReference type="EMBL" id="BC100868">
    <property type="protein sequence ID" value="AAI00869.1"/>
    <property type="molecule type" value="mRNA"/>
</dbReference>
<dbReference type="EMBL" id="BC100869">
    <property type="protein sequence ID" value="AAI00870.1"/>
    <property type="molecule type" value="mRNA"/>
</dbReference>
<dbReference type="EMBL" id="BC100870">
    <property type="protein sequence ID" value="AAI00871.1"/>
    <property type="molecule type" value="mRNA"/>
</dbReference>
<dbReference type="CCDS" id="CCDS7065.1"/>
<dbReference type="RefSeq" id="NP_444277.2">
    <property type="nucleotide sequence ID" value="NM_053049.3"/>
</dbReference>
<dbReference type="PDB" id="2RMH">
    <property type="method" value="NMR"/>
    <property type="chains" value="A=120-157"/>
</dbReference>
<dbReference type="PDB" id="3N93">
    <property type="method" value="X-ray"/>
    <property type="resolution" value="2.50 A"/>
    <property type="chains" value="C=142-157"/>
</dbReference>
<dbReference type="PDBsum" id="2RMH"/>
<dbReference type="PDBsum" id="3N93"/>
<dbReference type="SMR" id="Q969E3"/>
<dbReference type="BioGRID" id="125284">
    <property type="interactions" value="24"/>
</dbReference>
<dbReference type="FunCoup" id="Q969E3">
    <property type="interactions" value="434"/>
</dbReference>
<dbReference type="IntAct" id="Q969E3">
    <property type="interactions" value="20"/>
</dbReference>
<dbReference type="STRING" id="9606.ENSP00000369798"/>
<dbReference type="iPTMnet" id="Q969E3"/>
<dbReference type="PhosphoSitePlus" id="Q969E3"/>
<dbReference type="BioMuta" id="UCN3"/>
<dbReference type="DMDM" id="296452853"/>
<dbReference type="MassIVE" id="Q969E3"/>
<dbReference type="PaxDb" id="9606-ENSP00000369798"/>
<dbReference type="PeptideAtlas" id="Q969E3"/>
<dbReference type="ProteomicsDB" id="75743"/>
<dbReference type="Antibodypedia" id="24078">
    <property type="antibodies" value="155 antibodies from 27 providers"/>
</dbReference>
<dbReference type="DNASU" id="114131"/>
<dbReference type="Ensembl" id="ENST00000380433.5">
    <property type="protein sequence ID" value="ENSP00000369798.3"/>
    <property type="gene ID" value="ENSG00000178473.7"/>
</dbReference>
<dbReference type="GeneID" id="114131"/>
<dbReference type="KEGG" id="hsa:114131"/>
<dbReference type="MANE-Select" id="ENST00000380433.5">
    <property type="protein sequence ID" value="ENSP00000369798.3"/>
    <property type="RefSeq nucleotide sequence ID" value="NM_053049.4"/>
    <property type="RefSeq protein sequence ID" value="NP_444277.2"/>
</dbReference>
<dbReference type="UCSC" id="uc001ihx.2">
    <property type="organism name" value="human"/>
</dbReference>
<dbReference type="AGR" id="HGNC:17781"/>
<dbReference type="CTD" id="114131"/>
<dbReference type="DisGeNET" id="114131"/>
<dbReference type="GeneCards" id="UCN3"/>
<dbReference type="HGNC" id="HGNC:17781">
    <property type="gene designation" value="UCN3"/>
</dbReference>
<dbReference type="HPA" id="ENSG00000178473">
    <property type="expression patterns" value="Group enriched (intestine, pancreas, pituitary gland, stomach)"/>
</dbReference>
<dbReference type="MIM" id="605901">
    <property type="type" value="gene"/>
</dbReference>
<dbReference type="neXtProt" id="NX_Q969E3"/>
<dbReference type="OpenTargets" id="ENSG00000178473"/>
<dbReference type="PharmGKB" id="PA130413153"/>
<dbReference type="VEuPathDB" id="HostDB:ENSG00000178473"/>
<dbReference type="eggNOG" id="ENOG502S1WZ">
    <property type="taxonomic scope" value="Eukaryota"/>
</dbReference>
<dbReference type="GeneTree" id="ENSGT00940000160568"/>
<dbReference type="HOGENOM" id="CLU_1767442_0_0_1"/>
<dbReference type="InParanoid" id="Q969E3"/>
<dbReference type="OMA" id="FPGEGHY"/>
<dbReference type="OrthoDB" id="9949770at2759"/>
<dbReference type="PAN-GO" id="Q969E3">
    <property type="GO annotations" value="5 GO annotations based on evolutionary models"/>
</dbReference>
<dbReference type="PhylomeDB" id="Q969E3"/>
<dbReference type="TreeFam" id="TF330723"/>
<dbReference type="PathwayCommons" id="Q969E3"/>
<dbReference type="Reactome" id="R-HSA-373080">
    <property type="pathway name" value="Class B/2 (Secretin family receptors)"/>
</dbReference>
<dbReference type="SignaLink" id="Q969E3"/>
<dbReference type="BioGRID-ORCS" id="114131">
    <property type="hits" value="8 hits in 1142 CRISPR screens"/>
</dbReference>
<dbReference type="ChiTaRS" id="UCN3">
    <property type="organism name" value="human"/>
</dbReference>
<dbReference type="GeneWiki" id="UCN3"/>
<dbReference type="GenomeRNAi" id="114131"/>
<dbReference type="Pharos" id="Q969E3">
    <property type="development level" value="Tbio"/>
</dbReference>
<dbReference type="PRO" id="PR:Q969E3"/>
<dbReference type="Proteomes" id="UP000005640">
    <property type="component" value="Chromosome 10"/>
</dbReference>
<dbReference type="RNAct" id="Q969E3">
    <property type="molecule type" value="protein"/>
</dbReference>
<dbReference type="Bgee" id="ENSG00000178473">
    <property type="expression patterns" value="Expressed in islet of Langerhans and 50 other cell types or tissues"/>
</dbReference>
<dbReference type="GO" id="GO:0043679">
    <property type="term" value="C:axon terminus"/>
    <property type="evidence" value="ECO:0007669"/>
    <property type="project" value="Ensembl"/>
</dbReference>
<dbReference type="GO" id="GO:0005576">
    <property type="term" value="C:extracellular region"/>
    <property type="evidence" value="ECO:0000304"/>
    <property type="project" value="Reactome"/>
</dbReference>
<dbReference type="GO" id="GO:0005615">
    <property type="term" value="C:extracellular space"/>
    <property type="evidence" value="ECO:0000318"/>
    <property type="project" value="GO_Central"/>
</dbReference>
<dbReference type="GO" id="GO:0043196">
    <property type="term" value="C:varicosity"/>
    <property type="evidence" value="ECO:0007669"/>
    <property type="project" value="Ensembl"/>
</dbReference>
<dbReference type="GO" id="GO:0051431">
    <property type="term" value="F:corticotropin-releasing hormone receptor 2 binding"/>
    <property type="evidence" value="ECO:0007669"/>
    <property type="project" value="InterPro"/>
</dbReference>
<dbReference type="GO" id="GO:0051429">
    <property type="term" value="F:corticotropin-releasing hormone receptor binding"/>
    <property type="evidence" value="ECO:0000353"/>
    <property type="project" value="UniProtKB"/>
</dbReference>
<dbReference type="GO" id="GO:0005179">
    <property type="term" value="F:hormone activity"/>
    <property type="evidence" value="ECO:0007669"/>
    <property type="project" value="UniProtKB-KW"/>
</dbReference>
<dbReference type="GO" id="GO:0007189">
    <property type="term" value="P:adenylate cyclase-activating G protein-coupled receptor signaling pathway"/>
    <property type="evidence" value="ECO:0000314"/>
    <property type="project" value="UniProtKB"/>
</dbReference>
<dbReference type="GO" id="GO:0071456">
    <property type="term" value="P:cellular response to hypoxia"/>
    <property type="evidence" value="ECO:0007669"/>
    <property type="project" value="Ensembl"/>
</dbReference>
<dbReference type="GO" id="GO:0031669">
    <property type="term" value="P:cellular response to nutrient levels"/>
    <property type="evidence" value="ECO:0000318"/>
    <property type="project" value="GO_Central"/>
</dbReference>
<dbReference type="GO" id="GO:0007586">
    <property type="term" value="P:digestion"/>
    <property type="evidence" value="ECO:0007669"/>
    <property type="project" value="InterPro"/>
</dbReference>
<dbReference type="GO" id="GO:0009755">
    <property type="term" value="P:hormone-mediated signaling pathway"/>
    <property type="evidence" value="ECO:0000314"/>
    <property type="project" value="UniProtKB"/>
</dbReference>
<dbReference type="GO" id="GO:0032024">
    <property type="term" value="P:positive regulation of insulin secretion"/>
    <property type="evidence" value="ECO:0007669"/>
    <property type="project" value="Ensembl"/>
</dbReference>
<dbReference type="GO" id="GO:0045838">
    <property type="term" value="P:positive regulation of membrane potential"/>
    <property type="evidence" value="ECO:0007669"/>
    <property type="project" value="Ensembl"/>
</dbReference>
<dbReference type="GO" id="GO:0051412">
    <property type="term" value="P:response to corticosterone"/>
    <property type="evidence" value="ECO:0007669"/>
    <property type="project" value="Ensembl"/>
</dbReference>
<dbReference type="GO" id="GO:0009749">
    <property type="term" value="P:response to glucose"/>
    <property type="evidence" value="ECO:0007669"/>
    <property type="project" value="Ensembl"/>
</dbReference>
<dbReference type="GO" id="GO:0035902">
    <property type="term" value="P:response to immobilization stress"/>
    <property type="evidence" value="ECO:0007669"/>
    <property type="project" value="Ensembl"/>
</dbReference>
<dbReference type="GO" id="GO:0042594">
    <property type="term" value="P:response to starvation"/>
    <property type="evidence" value="ECO:0007669"/>
    <property type="project" value="Ensembl"/>
</dbReference>
<dbReference type="InterPro" id="IPR000187">
    <property type="entry name" value="CRF"/>
</dbReference>
<dbReference type="InterPro" id="IPR024270">
    <property type="entry name" value="Urocortin_II/III"/>
</dbReference>
<dbReference type="PANTHER" id="PTHR17575">
    <property type="entry name" value="UROCORTIN-2 AND 3"/>
    <property type="match status" value="1"/>
</dbReference>
<dbReference type="PANTHER" id="PTHR17575:SF1">
    <property type="entry name" value="UROCORTIN-3"/>
    <property type="match status" value="1"/>
</dbReference>
<dbReference type="Pfam" id="PF00473">
    <property type="entry name" value="CRF"/>
    <property type="match status" value="1"/>
</dbReference>
<comment type="function">
    <text>Suppresses food intake, delays gastric emptying and decreases heat-induced edema. Might represent an endogenous ligand for maintaining homeostasis after stress.</text>
</comment>
<comment type="subunit">
    <text evidence="6">Binds with high affinity to CRF receptors 2-alpha and 2-beta.</text>
</comment>
<comment type="interaction">
    <interactant intactId="EBI-26585468">
        <id>Q969E3</id>
    </interactant>
    <interactant intactId="EBI-26585317">
        <id>Q13324-1</id>
        <label>CRHR2</label>
    </interactant>
    <organismsDiffer>false</organismsDiffer>
    <experiments>2</experiments>
</comment>
<comment type="subcellular location">
    <subcellularLocation>
        <location>Secreted</location>
    </subcellularLocation>
</comment>
<comment type="similarity">
    <text evidence="7">Belongs to the sauvagine/corticotropin-releasing factor/urotensin I family.</text>
</comment>
<reference key="1">
    <citation type="journal article" date="2001" name="Proc. Natl. Acad. Sci. U.S.A.">
        <title>Identification of urocortin III, an additional member of the corticotropin-releasing factor (CRF) family with high affinity for the CRF2 receptor.</title>
        <authorList>
            <person name="Lewis K."/>
            <person name="Li C."/>
            <person name="Perrin M.H."/>
            <person name="Blount A."/>
            <person name="Kunitake K."/>
            <person name="Donaldson C."/>
            <person name="Vaughan J."/>
            <person name="Reyes T.M."/>
            <person name="Gulyas J."/>
            <person name="Fischer W."/>
            <person name="Bilezikjian L."/>
            <person name="Rivier J."/>
            <person name="Sawchenko P.E."/>
            <person name="Vale W.W."/>
        </authorList>
    </citation>
    <scope>NUCLEOTIDE SEQUENCE [GENOMIC DNA]</scope>
    <scope>SYNTHESIS OF UCN III</scope>
    <scope>VARIANT GLY-91</scope>
</reference>
<reference key="2">
    <citation type="journal article" date="2001" name="Nat. Med.">
        <title>Human stresscopin and stresscopin-related peptide are selective ligands for the type 2 corticotropin-releasing hormone receptor.</title>
        <authorList>
            <person name="Hsu S.Y."/>
            <person name="Hsueh A.J.W."/>
        </authorList>
    </citation>
    <scope>NUCLEOTIDE SEQUENCE [MRNA]</scope>
    <scope>VARIANT GLY-91</scope>
</reference>
<reference key="3">
    <citation type="journal article" date="2004" name="Nature">
        <title>The DNA sequence and comparative analysis of human chromosome 10.</title>
        <authorList>
            <person name="Deloukas P."/>
            <person name="Earthrowl M.E."/>
            <person name="Grafham D.V."/>
            <person name="Rubenfield M."/>
            <person name="French L."/>
            <person name="Steward C.A."/>
            <person name="Sims S.K."/>
            <person name="Jones M.C."/>
            <person name="Searle S."/>
            <person name="Scott C."/>
            <person name="Howe K."/>
            <person name="Hunt S.E."/>
            <person name="Andrews T.D."/>
            <person name="Gilbert J.G.R."/>
            <person name="Swarbreck D."/>
            <person name="Ashurst J.L."/>
            <person name="Taylor A."/>
            <person name="Battles J."/>
            <person name="Bird C.P."/>
            <person name="Ainscough R."/>
            <person name="Almeida J.P."/>
            <person name="Ashwell R.I.S."/>
            <person name="Ambrose K.D."/>
            <person name="Babbage A.K."/>
            <person name="Bagguley C.L."/>
            <person name="Bailey J."/>
            <person name="Banerjee R."/>
            <person name="Bates K."/>
            <person name="Beasley H."/>
            <person name="Bray-Allen S."/>
            <person name="Brown A.J."/>
            <person name="Brown J.Y."/>
            <person name="Burford D.C."/>
            <person name="Burrill W."/>
            <person name="Burton J."/>
            <person name="Cahill P."/>
            <person name="Camire D."/>
            <person name="Carter N.P."/>
            <person name="Chapman J.C."/>
            <person name="Clark S.Y."/>
            <person name="Clarke G."/>
            <person name="Clee C.M."/>
            <person name="Clegg S."/>
            <person name="Corby N."/>
            <person name="Coulson A."/>
            <person name="Dhami P."/>
            <person name="Dutta I."/>
            <person name="Dunn M."/>
            <person name="Faulkner L."/>
            <person name="Frankish A."/>
            <person name="Frankland J.A."/>
            <person name="Garner P."/>
            <person name="Garnett J."/>
            <person name="Gribble S."/>
            <person name="Griffiths C."/>
            <person name="Grocock R."/>
            <person name="Gustafson E."/>
            <person name="Hammond S."/>
            <person name="Harley J.L."/>
            <person name="Hart E."/>
            <person name="Heath P.D."/>
            <person name="Ho T.P."/>
            <person name="Hopkins B."/>
            <person name="Horne J."/>
            <person name="Howden P.J."/>
            <person name="Huckle E."/>
            <person name="Hynds C."/>
            <person name="Johnson C."/>
            <person name="Johnson D."/>
            <person name="Kana A."/>
            <person name="Kay M."/>
            <person name="Kimberley A.M."/>
            <person name="Kershaw J.K."/>
            <person name="Kokkinaki M."/>
            <person name="Laird G.K."/>
            <person name="Lawlor S."/>
            <person name="Lee H.M."/>
            <person name="Leongamornlert D.A."/>
            <person name="Laird G."/>
            <person name="Lloyd C."/>
            <person name="Lloyd D.M."/>
            <person name="Loveland J."/>
            <person name="Lovell J."/>
            <person name="McLaren S."/>
            <person name="McLay K.E."/>
            <person name="McMurray A."/>
            <person name="Mashreghi-Mohammadi M."/>
            <person name="Matthews L."/>
            <person name="Milne S."/>
            <person name="Nickerson T."/>
            <person name="Nguyen M."/>
            <person name="Overton-Larty E."/>
            <person name="Palmer S.A."/>
            <person name="Pearce A.V."/>
            <person name="Peck A.I."/>
            <person name="Pelan S."/>
            <person name="Phillimore B."/>
            <person name="Porter K."/>
            <person name="Rice C.M."/>
            <person name="Rogosin A."/>
            <person name="Ross M.T."/>
            <person name="Sarafidou T."/>
            <person name="Sehra H.K."/>
            <person name="Shownkeen R."/>
            <person name="Skuce C.D."/>
            <person name="Smith M."/>
            <person name="Standring L."/>
            <person name="Sycamore N."/>
            <person name="Tester J."/>
            <person name="Thorpe A."/>
            <person name="Torcasso W."/>
            <person name="Tracey A."/>
            <person name="Tromans A."/>
            <person name="Tsolas J."/>
            <person name="Wall M."/>
            <person name="Walsh J."/>
            <person name="Wang H."/>
            <person name="Weinstock K."/>
            <person name="West A.P."/>
            <person name="Willey D.L."/>
            <person name="Whitehead S.L."/>
            <person name="Wilming L."/>
            <person name="Wray P.W."/>
            <person name="Young L."/>
            <person name="Chen Y."/>
            <person name="Lovering R.C."/>
            <person name="Moschonas N.K."/>
            <person name="Siebert R."/>
            <person name="Fechtel K."/>
            <person name="Bentley D."/>
            <person name="Durbin R.M."/>
            <person name="Hubbard T."/>
            <person name="Doucette-Stamm L."/>
            <person name="Beck S."/>
            <person name="Smith D.R."/>
            <person name="Rogers J."/>
        </authorList>
    </citation>
    <scope>NUCLEOTIDE SEQUENCE [LARGE SCALE GENOMIC DNA]</scope>
</reference>
<reference key="4">
    <citation type="journal article" date="2004" name="Genome Res.">
        <title>The status, quality, and expansion of the NIH full-length cDNA project: the Mammalian Gene Collection (MGC).</title>
        <authorList>
            <consortium name="The MGC Project Team"/>
        </authorList>
    </citation>
    <scope>NUCLEOTIDE SEQUENCE [LARGE SCALE MRNA]</scope>
    <scope>VARIANT GLY-91</scope>
</reference>
<reference key="5">
    <citation type="journal article" date="2007" name="J. Am. Chem. Soc.">
        <title>Common and divergent structural features of a series of corticotropin releasing factor-related peptides.</title>
        <authorList>
            <person name="Grace C.R.R."/>
            <person name="Perrin M.H."/>
            <person name="Cantle J.P."/>
            <person name="Vale W.W."/>
            <person name="Rivier J.E."/>
            <person name="Riek R."/>
        </authorList>
    </citation>
    <scope>STRUCTURE BY NMR OF 120-157</scope>
</reference>
<reference key="6">
    <citation type="journal article" date="2010" name="J. Biol. Chem.">
        <title>Structural basis for hormone recognition by the Human CRFR2{alpha} G protein-coupled receptor.</title>
        <authorList>
            <person name="Pal K."/>
            <person name="Swaminathan K."/>
            <person name="Xu H.E."/>
            <person name="Pioszak A.A."/>
        </authorList>
    </citation>
    <scope>X-RAY CRYSTALLOGRAPHY (2.5 ANGSTROMS) OF 142-157 IN COMPLEX WITH CRHR2</scope>
</reference>
<gene>
    <name type="primary">UCN3</name>
    <name type="synonym">SPC</name>
</gene>
<keyword id="KW-0002">3D-structure</keyword>
<keyword id="KW-0027">Amidation</keyword>
<keyword id="KW-0372">Hormone</keyword>
<keyword id="KW-1267">Proteomics identification</keyword>
<keyword id="KW-1185">Reference proteome</keyword>
<keyword id="KW-0964">Secreted</keyword>
<keyword id="KW-0732">Signal</keyword>
<accession>Q969E3</accession>
<accession>Q496H2</accession>
<accession>Q5SR91</accession>
<protein>
    <recommendedName>
        <fullName>Urocortin-3</fullName>
    </recommendedName>
    <alternativeName>
        <fullName>Stresscopin</fullName>
    </alternativeName>
    <alternativeName>
        <fullName>Urocortin III</fullName>
        <shortName>Ucn III</shortName>
    </alternativeName>
</protein>
<name>UCN3_HUMAN</name>
<organism>
    <name type="scientific">Homo sapiens</name>
    <name type="common">Human</name>
    <dbReference type="NCBI Taxonomy" id="9606"/>
    <lineage>
        <taxon>Eukaryota</taxon>
        <taxon>Metazoa</taxon>
        <taxon>Chordata</taxon>
        <taxon>Craniata</taxon>
        <taxon>Vertebrata</taxon>
        <taxon>Euteleostomi</taxon>
        <taxon>Mammalia</taxon>
        <taxon>Eutheria</taxon>
        <taxon>Euarchontoglires</taxon>
        <taxon>Primates</taxon>
        <taxon>Haplorrhini</taxon>
        <taxon>Catarrhini</taxon>
        <taxon>Hominidae</taxon>
        <taxon>Homo</taxon>
    </lineage>
</organism>